<feature type="chain" id="PRO_0000251600" description="Pleckstrin homology domain-containing family F member 2">
    <location>
        <begin position="1"/>
        <end position="249"/>
    </location>
</feature>
<feature type="domain" description="PH" evidence="2">
    <location>
        <begin position="35"/>
        <end position="131"/>
    </location>
</feature>
<feature type="zinc finger region" description="FYVE-type" evidence="1">
    <location>
        <begin position="152"/>
        <end position="212"/>
    </location>
</feature>
<feature type="region of interest" description="Disordered" evidence="3">
    <location>
        <begin position="221"/>
        <end position="249"/>
    </location>
</feature>
<feature type="compositionally biased region" description="Polar residues" evidence="3">
    <location>
        <begin position="221"/>
        <end position="233"/>
    </location>
</feature>
<feature type="compositionally biased region" description="Acidic residues" evidence="3">
    <location>
        <begin position="238"/>
        <end position="249"/>
    </location>
</feature>
<feature type="binding site" evidence="1">
    <location>
        <position position="158"/>
    </location>
    <ligand>
        <name>Zn(2+)</name>
        <dbReference type="ChEBI" id="CHEBI:29105"/>
        <label>1</label>
    </ligand>
</feature>
<feature type="binding site" evidence="1">
    <location>
        <position position="161"/>
    </location>
    <ligand>
        <name>Zn(2+)</name>
        <dbReference type="ChEBI" id="CHEBI:29105"/>
        <label>1</label>
    </ligand>
</feature>
<feature type="binding site" evidence="1">
    <location>
        <position position="175"/>
    </location>
    <ligand>
        <name>Zn(2+)</name>
        <dbReference type="ChEBI" id="CHEBI:29105"/>
        <label>2</label>
    </ligand>
</feature>
<feature type="binding site" evidence="1">
    <location>
        <position position="178"/>
    </location>
    <ligand>
        <name>Zn(2+)</name>
        <dbReference type="ChEBI" id="CHEBI:29105"/>
        <label>2</label>
    </ligand>
</feature>
<feature type="binding site" evidence="1">
    <location>
        <position position="183"/>
    </location>
    <ligand>
        <name>Zn(2+)</name>
        <dbReference type="ChEBI" id="CHEBI:29105"/>
        <label>1</label>
    </ligand>
</feature>
<feature type="binding site" evidence="1">
    <location>
        <position position="186"/>
    </location>
    <ligand>
        <name>Zn(2+)</name>
        <dbReference type="ChEBI" id="CHEBI:29105"/>
        <label>1</label>
    </ligand>
</feature>
<feature type="binding site" evidence="1">
    <location>
        <position position="204"/>
    </location>
    <ligand>
        <name>Zn(2+)</name>
        <dbReference type="ChEBI" id="CHEBI:29105"/>
        <label>2</label>
    </ligand>
</feature>
<feature type="binding site" evidence="1">
    <location>
        <position position="207"/>
    </location>
    <ligand>
        <name>Zn(2+)</name>
        <dbReference type="ChEBI" id="CHEBI:29105"/>
        <label>2</label>
    </ligand>
</feature>
<feature type="modified residue" description="Phosphoserine" evidence="13">
    <location>
        <position position="16"/>
    </location>
</feature>
<feature type="modified residue" description="N6-acetyllysine" evidence="10">
    <location>
        <position position="44"/>
    </location>
</feature>
<feature type="modified residue" description="Phosphoserine" evidence="9 11 12">
    <location>
        <position position="239"/>
    </location>
</feature>
<feature type="modified residue" description="Phosphoserine" evidence="11 12">
    <location>
        <position position="248"/>
    </location>
</feature>
<accession>Q9H8W4</accession>
<name>PKHF2_HUMAN</name>
<keyword id="KW-0007">Acetylation</keyword>
<keyword id="KW-0256">Endoplasmic reticulum</keyword>
<keyword id="KW-0967">Endosome</keyword>
<keyword id="KW-0472">Membrane</keyword>
<keyword id="KW-0479">Metal-binding</keyword>
<keyword id="KW-0597">Phosphoprotein</keyword>
<keyword id="KW-0653">Protein transport</keyword>
<keyword id="KW-1267">Proteomics identification</keyword>
<keyword id="KW-1185">Reference proteome</keyword>
<keyword id="KW-0813">Transport</keyword>
<keyword id="KW-0862">Zinc</keyword>
<keyword id="KW-0863">Zinc-finger</keyword>
<dbReference type="EMBL" id="AF434819">
    <property type="protein sequence ID" value="AAL30774.1"/>
    <property type="molecule type" value="mRNA"/>
</dbReference>
<dbReference type="EMBL" id="AK023249">
    <property type="protein sequence ID" value="BAB14486.1"/>
    <property type="molecule type" value="mRNA"/>
</dbReference>
<dbReference type="EMBL" id="AL834473">
    <property type="protein sequence ID" value="CAD39132.1"/>
    <property type="molecule type" value="mRNA"/>
</dbReference>
<dbReference type="EMBL" id="BC011806">
    <property type="protein sequence ID" value="AAH11806.1"/>
    <property type="molecule type" value="mRNA"/>
</dbReference>
<dbReference type="CCDS" id="CCDS6267.1"/>
<dbReference type="RefSeq" id="NP_078889.1">
    <property type="nucleotide sequence ID" value="NM_024613.4"/>
</dbReference>
<dbReference type="SMR" id="Q9H8W4"/>
<dbReference type="BioGRID" id="122791">
    <property type="interactions" value="191"/>
</dbReference>
<dbReference type="FunCoup" id="Q9H8W4">
    <property type="interactions" value="1236"/>
</dbReference>
<dbReference type="IntAct" id="Q9H8W4">
    <property type="interactions" value="169"/>
</dbReference>
<dbReference type="MINT" id="Q9H8W4"/>
<dbReference type="STRING" id="9606.ENSP00000322373"/>
<dbReference type="iPTMnet" id="Q9H8W4"/>
<dbReference type="PhosphoSitePlus" id="Q9H8W4"/>
<dbReference type="BioMuta" id="PLEKHF2"/>
<dbReference type="DMDM" id="74762744"/>
<dbReference type="jPOST" id="Q9H8W4"/>
<dbReference type="MassIVE" id="Q9H8W4"/>
<dbReference type="PaxDb" id="9606-ENSP00000322373"/>
<dbReference type="PeptideAtlas" id="Q9H8W4"/>
<dbReference type="ProteomicsDB" id="81249"/>
<dbReference type="Pumba" id="Q9H8W4"/>
<dbReference type="Antibodypedia" id="25937">
    <property type="antibodies" value="116 antibodies from 21 providers"/>
</dbReference>
<dbReference type="DNASU" id="79666"/>
<dbReference type="Ensembl" id="ENST00000315367.4">
    <property type="protein sequence ID" value="ENSP00000322373.3"/>
    <property type="gene ID" value="ENSG00000175895.5"/>
</dbReference>
<dbReference type="Ensembl" id="ENST00000519516.1">
    <property type="protein sequence ID" value="ENSP00000427792.1"/>
    <property type="gene ID" value="ENSG00000175895.5"/>
</dbReference>
<dbReference type="Ensembl" id="ENST00000700745.1">
    <property type="protein sequence ID" value="ENSP00000515158.1"/>
    <property type="gene ID" value="ENSG00000175895.5"/>
</dbReference>
<dbReference type="Ensembl" id="ENST00000700746.1">
    <property type="protein sequence ID" value="ENSP00000515159.1"/>
    <property type="gene ID" value="ENSG00000175895.5"/>
</dbReference>
<dbReference type="Ensembl" id="ENST00000700748.1">
    <property type="protein sequence ID" value="ENSP00000515160.1"/>
    <property type="gene ID" value="ENSG00000175895.5"/>
</dbReference>
<dbReference type="Ensembl" id="ENST00000700749.1">
    <property type="protein sequence ID" value="ENSP00000515161.1"/>
    <property type="gene ID" value="ENSG00000175895.5"/>
</dbReference>
<dbReference type="GeneID" id="79666"/>
<dbReference type="KEGG" id="hsa:79666"/>
<dbReference type="MANE-Select" id="ENST00000315367.4">
    <property type="protein sequence ID" value="ENSP00000322373.3"/>
    <property type="RefSeq nucleotide sequence ID" value="NM_024613.4"/>
    <property type="RefSeq protein sequence ID" value="NP_078889.1"/>
</dbReference>
<dbReference type="UCSC" id="uc003yhn.3">
    <property type="organism name" value="human"/>
</dbReference>
<dbReference type="AGR" id="HGNC:20757"/>
<dbReference type="CTD" id="79666"/>
<dbReference type="DisGeNET" id="79666"/>
<dbReference type="GeneCards" id="PLEKHF2"/>
<dbReference type="HGNC" id="HGNC:20757">
    <property type="gene designation" value="PLEKHF2"/>
</dbReference>
<dbReference type="HPA" id="ENSG00000175895">
    <property type="expression patterns" value="Tissue enhanced (bone marrow, lymphoid tissue)"/>
</dbReference>
<dbReference type="MIM" id="615208">
    <property type="type" value="gene"/>
</dbReference>
<dbReference type="neXtProt" id="NX_Q9H8W4"/>
<dbReference type="OpenTargets" id="ENSG00000175895"/>
<dbReference type="PharmGKB" id="PA128394715"/>
<dbReference type="VEuPathDB" id="HostDB:ENSG00000175895"/>
<dbReference type="eggNOG" id="KOG1729">
    <property type="taxonomic scope" value="Eukaryota"/>
</dbReference>
<dbReference type="GeneTree" id="ENSGT00940000156408"/>
<dbReference type="HOGENOM" id="CLU_064864_1_0_1"/>
<dbReference type="InParanoid" id="Q9H8W4"/>
<dbReference type="OMA" id="PVRVCEH"/>
<dbReference type="OrthoDB" id="70570at2759"/>
<dbReference type="PAN-GO" id="Q9H8W4">
    <property type="GO annotations" value="4 GO annotations based on evolutionary models"/>
</dbReference>
<dbReference type="PhylomeDB" id="Q9H8W4"/>
<dbReference type="TreeFam" id="TF315235"/>
<dbReference type="PathwayCommons" id="Q9H8W4"/>
<dbReference type="SignaLink" id="Q9H8W4"/>
<dbReference type="SIGNOR" id="Q9H8W4"/>
<dbReference type="BioGRID-ORCS" id="79666">
    <property type="hits" value="21 hits in 1159 CRISPR screens"/>
</dbReference>
<dbReference type="ChiTaRS" id="PLEKHF2">
    <property type="organism name" value="human"/>
</dbReference>
<dbReference type="GeneWiki" id="PLEKHF2"/>
<dbReference type="GenomeRNAi" id="79666"/>
<dbReference type="Pharos" id="Q9H8W4">
    <property type="development level" value="Tbio"/>
</dbReference>
<dbReference type="PRO" id="PR:Q9H8W4"/>
<dbReference type="Proteomes" id="UP000005640">
    <property type="component" value="Chromosome 8"/>
</dbReference>
<dbReference type="RNAct" id="Q9H8W4">
    <property type="molecule type" value="protein"/>
</dbReference>
<dbReference type="Bgee" id="ENSG00000175895">
    <property type="expression patterns" value="Expressed in secondary oocyte and 185 other cell types or tissues"/>
</dbReference>
<dbReference type="GO" id="GO:0005769">
    <property type="term" value="C:early endosome"/>
    <property type="evidence" value="ECO:0000318"/>
    <property type="project" value="GO_Central"/>
</dbReference>
<dbReference type="GO" id="GO:0031901">
    <property type="term" value="C:early endosome membrane"/>
    <property type="evidence" value="ECO:0007669"/>
    <property type="project" value="UniProtKB-SubCell"/>
</dbReference>
<dbReference type="GO" id="GO:0005783">
    <property type="term" value="C:endoplasmic reticulum"/>
    <property type="evidence" value="ECO:0007669"/>
    <property type="project" value="UniProtKB-SubCell"/>
</dbReference>
<dbReference type="GO" id="GO:0030133">
    <property type="term" value="C:transport vesicle"/>
    <property type="evidence" value="ECO:0000314"/>
    <property type="project" value="LIFEdb"/>
</dbReference>
<dbReference type="GO" id="GO:0035091">
    <property type="term" value="F:phosphatidylinositol binding"/>
    <property type="evidence" value="ECO:0000318"/>
    <property type="project" value="GO_Central"/>
</dbReference>
<dbReference type="GO" id="GO:0008270">
    <property type="term" value="F:zinc ion binding"/>
    <property type="evidence" value="ECO:0007669"/>
    <property type="project" value="UniProtKB-KW"/>
</dbReference>
<dbReference type="GO" id="GO:0007032">
    <property type="term" value="P:endosome organization"/>
    <property type="evidence" value="ECO:0000318"/>
    <property type="project" value="GO_Central"/>
</dbReference>
<dbReference type="GO" id="GO:0008333">
    <property type="term" value="P:endosome to lysosome transport"/>
    <property type="evidence" value="ECO:0000318"/>
    <property type="project" value="GO_Central"/>
</dbReference>
<dbReference type="GO" id="GO:0015031">
    <property type="term" value="P:protein transport"/>
    <property type="evidence" value="ECO:0007669"/>
    <property type="project" value="UniProtKB-KW"/>
</dbReference>
<dbReference type="CDD" id="cd15755">
    <property type="entry name" value="FYVE_PKHF2"/>
    <property type="match status" value="1"/>
</dbReference>
<dbReference type="CDD" id="cd01218">
    <property type="entry name" value="PH_Phafin2-like"/>
    <property type="match status" value="1"/>
</dbReference>
<dbReference type="FunFam" id="2.30.29.30:FF:000167">
    <property type="entry name" value="Pleckstrin homology domain-containing family F member 2"/>
    <property type="match status" value="1"/>
</dbReference>
<dbReference type="FunFam" id="3.30.40.10:FF:000212">
    <property type="entry name" value="pleckstrin homology domain-containing family F member 2"/>
    <property type="match status" value="1"/>
</dbReference>
<dbReference type="Gene3D" id="2.30.29.30">
    <property type="entry name" value="Pleckstrin-homology domain (PH domain)/Phosphotyrosine-binding domain (PTB)"/>
    <property type="match status" value="1"/>
</dbReference>
<dbReference type="Gene3D" id="3.30.40.10">
    <property type="entry name" value="Zinc/RING finger domain, C3HC4 (zinc finger)"/>
    <property type="match status" value="1"/>
</dbReference>
<dbReference type="InterPro" id="IPR011993">
    <property type="entry name" value="PH-like_dom_sf"/>
</dbReference>
<dbReference type="InterPro" id="IPR001849">
    <property type="entry name" value="PH_domain"/>
</dbReference>
<dbReference type="InterPro" id="IPR051765">
    <property type="entry name" value="PH_domain-containing_F"/>
</dbReference>
<dbReference type="InterPro" id="IPR037871">
    <property type="entry name" value="PH_Phafin"/>
</dbReference>
<dbReference type="InterPro" id="IPR047966">
    <property type="entry name" value="PLEKHF2_FYVE"/>
</dbReference>
<dbReference type="InterPro" id="IPR000306">
    <property type="entry name" value="Znf_FYVE"/>
</dbReference>
<dbReference type="InterPro" id="IPR017455">
    <property type="entry name" value="Znf_FYVE-rel"/>
</dbReference>
<dbReference type="InterPro" id="IPR011011">
    <property type="entry name" value="Znf_FYVE_PHD"/>
</dbReference>
<dbReference type="InterPro" id="IPR013083">
    <property type="entry name" value="Znf_RING/FYVE/PHD"/>
</dbReference>
<dbReference type="PANTHER" id="PTHR46280:SF1">
    <property type="entry name" value="PLECKSTRIN HOMOLOGY DOMAIN-CONTAINING FAMILY F MEMBER 2"/>
    <property type="match status" value="1"/>
</dbReference>
<dbReference type="PANTHER" id="PTHR46280">
    <property type="entry name" value="PLECKSTRIN HOMOLOGY DOMAIN-CONTAINING FAMILY F MEMBER 2-RELATED"/>
    <property type="match status" value="1"/>
</dbReference>
<dbReference type="Pfam" id="PF01363">
    <property type="entry name" value="FYVE"/>
    <property type="match status" value="1"/>
</dbReference>
<dbReference type="Pfam" id="PF00169">
    <property type="entry name" value="PH"/>
    <property type="match status" value="1"/>
</dbReference>
<dbReference type="SMART" id="SM00064">
    <property type="entry name" value="FYVE"/>
    <property type="match status" value="1"/>
</dbReference>
<dbReference type="SMART" id="SM00233">
    <property type="entry name" value="PH"/>
    <property type="match status" value="1"/>
</dbReference>
<dbReference type="SUPFAM" id="SSF57903">
    <property type="entry name" value="FYVE/PHD zinc finger"/>
    <property type="match status" value="1"/>
</dbReference>
<dbReference type="SUPFAM" id="SSF50729">
    <property type="entry name" value="PH domain-like"/>
    <property type="match status" value="1"/>
</dbReference>
<dbReference type="PROSITE" id="PS50003">
    <property type="entry name" value="PH_DOMAIN"/>
    <property type="match status" value="1"/>
</dbReference>
<dbReference type="PROSITE" id="PS50178">
    <property type="entry name" value="ZF_FYVE"/>
    <property type="match status" value="1"/>
</dbReference>
<sequence length="249" mass="27798">MVDRLANSEANTRRISIVENCFGAAGQPLTIPGRVLIGEGVLTKLCRKKPKARQFFLFNDILVYGNIVIQKKKYNKQHIIPLENVTIDSIKDEGDLRNGWLIKTPTKSFAVYAATATEKSEWMNHINKCVTDLLSKSGKTPSNEHAAVWVPDSEATVCMRCQKAKFTPVNRRHHCRKCGFVVCGPCSEKRFLLPSQSSKPVRICDFCYDLLSAGDMATCQPARSDSYSQSLKSPLNDMSDDDDDDDSSD</sequence>
<proteinExistence type="evidence at protein level"/>
<comment type="function">
    <text evidence="4 5 6">May play a role in early endosome fusion upstream of RAB5, hence regulating receptor trafficking and fluid-phase transport. Enhances cellular sensitivity to TNF-induced apoptosis (PubMed:18288467).</text>
</comment>
<comment type="subunit">
    <text>May interact with EEA1.</text>
</comment>
<comment type="interaction">
    <interactant intactId="EBI-742388">
        <id>Q9H8W4</id>
    </interactant>
    <interactant intactId="EBI-8584118">
        <id>Q9H172</id>
        <label>ABCG4</label>
    </interactant>
    <organismsDiffer>false</organismsDiffer>
    <experiments>3</experiments>
</comment>
<comment type="interaction">
    <interactant intactId="EBI-742388">
        <id>Q9H8W4</id>
    </interactant>
    <interactant intactId="EBI-3916242">
        <id>Q96HD9</id>
        <label>ACY3</label>
    </interactant>
    <organismsDiffer>false</organismsDiffer>
    <experiments>4</experiments>
</comment>
<comment type="interaction">
    <interactant intactId="EBI-742388">
        <id>Q9H8W4</id>
    </interactant>
    <interactant intactId="EBI-714732">
        <id>O75689</id>
        <label>ADAP1</label>
    </interactant>
    <organismsDiffer>false</organismsDiffer>
    <experiments>3</experiments>
</comment>
<comment type="interaction">
    <interactant intactId="EBI-742388">
        <id>Q9H8W4</id>
    </interactant>
    <interactant intactId="EBI-745226">
        <id>Q13155</id>
        <label>AIMP2</label>
    </interactant>
    <organismsDiffer>false</organismsDiffer>
    <experiments>3</experiments>
</comment>
<comment type="interaction">
    <interactant intactId="EBI-742388">
        <id>Q9H8W4</id>
    </interactant>
    <interactant intactId="EBI-3843564">
        <id>A1A5B4</id>
        <label>ANO9</label>
    </interactant>
    <organismsDiffer>false</organismsDiffer>
    <experiments>3</experiments>
</comment>
<comment type="interaction">
    <interactant intactId="EBI-742388">
        <id>Q9H8W4</id>
    </interactant>
    <interactant intactId="EBI-11957452">
        <id>Q4LE39-3</id>
        <label>ARID4B</label>
    </interactant>
    <organismsDiffer>false</organismsDiffer>
    <experiments>3</experiments>
</comment>
<comment type="interaction">
    <interactant intactId="EBI-742388">
        <id>Q9H8W4</id>
    </interactant>
    <interactant intactId="EBI-12092171">
        <id>Q12797-6</id>
        <label>ASPH</label>
    </interactant>
    <organismsDiffer>false</organismsDiffer>
    <experiments>3</experiments>
</comment>
<comment type="interaction">
    <interactant intactId="EBI-742388">
        <id>Q9H8W4</id>
    </interactant>
    <interactant intactId="EBI-10316571">
        <id>Q9NY43</id>
        <label>BARHL2</label>
    </interactant>
    <organismsDiffer>false</organismsDiffer>
    <experiments>3</experiments>
</comment>
<comment type="interaction">
    <interactant intactId="EBI-742388">
        <id>Q9H8W4</id>
    </interactant>
    <interactant intactId="EBI-1050106">
        <id>O75934</id>
        <label>BCAS2</label>
    </interactant>
    <organismsDiffer>false</organismsDiffer>
    <experiments>3</experiments>
</comment>
<comment type="interaction">
    <interactant intactId="EBI-742388">
        <id>Q9H8W4</id>
    </interactant>
    <interactant intactId="EBI-6083685">
        <id>Q9H6U6</id>
        <label>BCAS3</label>
    </interactant>
    <organismsDiffer>false</organismsDiffer>
    <experiments>3</experiments>
</comment>
<comment type="interaction">
    <interactant intactId="EBI-742388">
        <id>Q9H8W4</id>
    </interactant>
    <interactant intactId="EBI-465781">
        <id>Q9UL45</id>
        <label>BLOC1S6</label>
    </interactant>
    <organismsDiffer>false</organismsDiffer>
    <experiments>4</experiments>
</comment>
<comment type="interaction">
    <interactant intactId="EBI-742388">
        <id>Q9H8W4</id>
    </interactant>
    <interactant intactId="EBI-18924329">
        <id>Q96IK1-2</id>
        <label>BOD1</label>
    </interactant>
    <organismsDiffer>false</organismsDiffer>
    <experiments>3</experiments>
</comment>
<comment type="interaction">
    <interactant intactId="EBI-742388">
        <id>Q9H8W4</id>
    </interactant>
    <interactant intactId="EBI-711221">
        <id>Q9NPI1</id>
        <label>BRD7</label>
    </interactant>
    <organismsDiffer>false</organismsDiffer>
    <experiments>3</experiments>
</comment>
<comment type="interaction">
    <interactant intactId="EBI-742388">
        <id>Q9H8W4</id>
    </interactant>
    <interactant intactId="EBI-10178113">
        <id>Q96G97-4</id>
        <label>BSCL2</label>
    </interactant>
    <organismsDiffer>false</organismsDiffer>
    <experiments>3</experiments>
</comment>
<comment type="interaction">
    <interactant intactId="EBI-742388">
        <id>Q9H8W4</id>
    </interactant>
    <interactant intactId="EBI-905851">
        <id>P01024</id>
        <label>C3</label>
    </interactant>
    <organismsDiffer>false</organismsDiffer>
    <experiments>3</experiments>
</comment>
<comment type="interaction">
    <interactant intactId="EBI-742388">
        <id>Q9H8W4</id>
    </interactant>
    <interactant intactId="EBI-712912">
        <id>Q9HC52</id>
        <label>CBX8</label>
    </interactant>
    <organismsDiffer>false</organismsDiffer>
    <experiments>3</experiments>
</comment>
<comment type="interaction">
    <interactant intactId="EBI-742388">
        <id>Q9H8W4</id>
    </interactant>
    <interactant intactId="EBI-10749669">
        <id>Q8IYE0</id>
        <label>CCDC146</label>
    </interactant>
    <organismsDiffer>false</organismsDiffer>
    <experiments>3</experiments>
</comment>
<comment type="interaction">
    <interactant intactId="EBI-742388">
        <id>Q9H8W4</id>
    </interactant>
    <interactant intactId="EBI-2690264">
        <id>Q86WR0</id>
        <label>CCDC25</label>
    </interactant>
    <organismsDiffer>false</organismsDiffer>
    <experiments>3</experiments>
</comment>
<comment type="interaction">
    <interactant intactId="EBI-742388">
        <id>Q9H8W4</id>
    </interactant>
    <interactant intactId="EBI-11983537">
        <id>Q86Y33-5</id>
        <label>CDC20B</label>
    </interactant>
    <organismsDiffer>false</organismsDiffer>
    <experiments>3</experiments>
</comment>
<comment type="interaction">
    <interactant intactId="EBI-742388">
        <id>Q9H8W4</id>
    </interactant>
    <interactant intactId="EBI-744115">
        <id>Q9C0F1</id>
        <label>CEP44</label>
    </interactant>
    <organismsDiffer>false</organismsDiffer>
    <experiments>3</experiments>
</comment>
<comment type="interaction">
    <interactant intactId="EBI-742388">
        <id>Q9H8W4</id>
    </interactant>
    <interactant intactId="EBI-10274247">
        <id>Q8TCT0</id>
        <label>CERK</label>
    </interactant>
    <organismsDiffer>false</organismsDiffer>
    <experiments>3</experiments>
</comment>
<comment type="interaction">
    <interactant intactId="EBI-742388">
        <id>Q9H8W4</id>
    </interactant>
    <interactant intactId="EBI-2321769">
        <id>Q9Y6H1</id>
        <label>CHCHD2</label>
    </interactant>
    <organismsDiffer>false</organismsDiffer>
    <experiments>3</experiments>
</comment>
<comment type="interaction">
    <interactant intactId="EBI-742388">
        <id>Q9H8W4</id>
    </interactant>
    <interactant intactId="EBI-741528">
        <id>Q9UKJ5</id>
        <label>CHIC2</label>
    </interactant>
    <organismsDiffer>false</organismsDiffer>
    <experiments>3</experiments>
</comment>
<comment type="interaction">
    <interactant intactId="EBI-742388">
        <id>Q9H8W4</id>
    </interactant>
    <interactant intactId="EBI-1053725">
        <id>P10606</id>
        <label>COX5B</label>
    </interactant>
    <organismsDiffer>false</organismsDiffer>
    <experiments>3</experiments>
</comment>
<comment type="interaction">
    <interactant intactId="EBI-742388">
        <id>Q9H8W4</id>
    </interactant>
    <interactant intactId="EBI-7043337">
        <id>P05813</id>
        <label>CRYBA1</label>
    </interactant>
    <organismsDiffer>false</organismsDiffer>
    <experiments>3</experiments>
</comment>
<comment type="interaction">
    <interactant intactId="EBI-742388">
        <id>Q9H8W4</id>
    </interactant>
    <interactant intactId="EBI-724310">
        <id>Q15038</id>
        <label>DAZAP2</label>
    </interactant>
    <organismsDiffer>false</organismsDiffer>
    <experiments>3</experiments>
</comment>
<comment type="interaction">
    <interactant intactId="EBI-742388">
        <id>Q9H8W4</id>
    </interactant>
    <interactant intactId="EBI-9679045">
        <id>Q9NQL9</id>
        <label>DMRT3</label>
    </interactant>
    <organismsDiffer>false</organismsDiffer>
    <experiments>3</experiments>
</comment>
<comment type="interaction">
    <interactant intactId="EBI-742388">
        <id>Q9H8W4</id>
    </interactant>
    <interactant intactId="EBI-9379658">
        <id>Q86X45</id>
        <label>DNAAF11</label>
    </interactant>
    <organismsDiffer>false</organismsDiffer>
    <experiments>3</experiments>
</comment>
<comment type="interaction">
    <interactant intactId="EBI-742388">
        <id>Q9H8W4</id>
    </interactant>
    <interactant intactId="EBI-448771">
        <id>Q92608</id>
        <label>DOCK2</label>
    </interactant>
    <organismsDiffer>false</organismsDiffer>
    <experiments>3</experiments>
</comment>
<comment type="interaction">
    <interactant intactId="EBI-742388">
        <id>Q9H8W4</id>
    </interactant>
    <interactant intactId="EBI-1752361">
        <id>Q8IZD9</id>
        <label>DOCK3</label>
    </interactant>
    <organismsDiffer>false</organismsDiffer>
    <experiments>3</experiments>
</comment>
<comment type="interaction">
    <interactant intactId="EBI-742388">
        <id>Q9H8W4</id>
    </interactant>
    <interactant intactId="EBI-740376">
        <id>Q86UW9</id>
        <label>DTX2</label>
    </interactant>
    <organismsDiffer>false</organismsDiffer>
    <experiments>3</experiments>
</comment>
<comment type="interaction">
    <interactant intactId="EBI-742388">
        <id>Q9H8W4</id>
    </interactant>
    <interactant intactId="EBI-6591081">
        <id>Q13115</id>
        <label>DUSP4</label>
    </interactant>
    <organismsDiffer>false</organismsDiffer>
    <experiments>3</experiments>
</comment>
<comment type="interaction">
    <interactant intactId="EBI-742388">
        <id>Q9H8W4</id>
    </interactant>
    <interactant intactId="EBI-353741">
        <id>Q99613</id>
        <label>EIF3C</label>
    </interactant>
    <organismsDiffer>false</organismsDiffer>
    <experiments>3</experiments>
</comment>
<comment type="interaction">
    <interactant intactId="EBI-742388">
        <id>Q9H8W4</id>
    </interactant>
    <interactant intactId="EBI-12112376">
        <id>A0A0C4DGQ7</id>
        <label>EML2</label>
    </interactant>
    <organismsDiffer>false</organismsDiffer>
    <experiments>3</experiments>
</comment>
<comment type="interaction">
    <interactant intactId="EBI-742388">
        <id>Q9H8W4</id>
    </interactant>
    <interactant intactId="EBI-6251402">
        <id>Q9UPT5-1</id>
        <label>EXOC7</label>
    </interactant>
    <organismsDiffer>false</organismsDiffer>
    <experiments>3</experiments>
</comment>
<comment type="interaction">
    <interactant intactId="EBI-742388">
        <id>Q9H8W4</id>
    </interactant>
    <interactant intactId="EBI-4397076">
        <id>P16930</id>
        <label>FAH</label>
    </interactant>
    <organismsDiffer>false</organismsDiffer>
    <experiments>3</experiments>
</comment>
<comment type="interaction">
    <interactant intactId="EBI-742388">
        <id>Q9H8W4</id>
    </interactant>
    <interactant intactId="EBI-740282">
        <id>Q9NVF7</id>
        <label>FBXO28</label>
    </interactant>
    <organismsDiffer>false</organismsDiffer>
    <experiments>6</experiments>
</comment>
<comment type="interaction">
    <interactant intactId="EBI-742388">
        <id>Q9H8W4</id>
    </interactant>
    <interactant intactId="EBI-741068">
        <id>Q969U6</id>
        <label>FBXW5</label>
    </interactant>
    <organismsDiffer>false</organismsDiffer>
    <experiments>3</experiments>
</comment>
<comment type="interaction">
    <interactant intactId="EBI-742388">
        <id>Q9H8W4</id>
    </interactant>
    <interactant intactId="EBI-1054883">
        <id>Q92913</id>
        <label>FGF13</label>
    </interactant>
    <organismsDiffer>false</organismsDiffer>
    <experiments>3</experiments>
</comment>
<comment type="interaction">
    <interactant intactId="EBI-742388">
        <id>Q9H8W4</id>
    </interactant>
    <interactant intactId="EBI-10229248">
        <id>Q96C98</id>
        <label>FHL3</label>
    </interactant>
    <organismsDiffer>false</organismsDiffer>
    <experiments>3</experiments>
</comment>
<comment type="interaction">
    <interactant intactId="EBI-742388">
        <id>Q9H8W4</id>
    </interactant>
    <interactant intactId="EBI-9641086">
        <id>P21333-2</id>
        <label>FLNA</label>
    </interactant>
    <organismsDiffer>false</organismsDiffer>
    <experiments>5</experiments>
</comment>
<comment type="interaction">
    <interactant intactId="EBI-742388">
        <id>Q9H8W4</id>
    </interactant>
    <interactant intactId="EBI-5773072">
        <id>Q9BZ67</id>
        <label>FRMD8</label>
    </interactant>
    <organismsDiffer>false</organismsDiffer>
    <experiments>8</experiments>
</comment>
<comment type="interaction">
    <interactant intactId="EBI-742388">
        <id>Q9H8W4</id>
    </interactant>
    <interactant intactId="EBI-744104">
        <id>P55040</id>
        <label>GEM</label>
    </interactant>
    <organismsDiffer>false</organismsDiffer>
    <experiments>3</experiments>
</comment>
<comment type="interaction">
    <interactant intactId="EBI-742388">
        <id>Q9H8W4</id>
    </interactant>
    <interactant intactId="EBI-718281">
        <id>P55789</id>
        <label>GFER</label>
    </interactant>
    <organismsDiffer>false</organismsDiffer>
    <experiments>3</experiments>
</comment>
<comment type="interaction">
    <interactant intactId="EBI-742388">
        <id>Q9H8W4</id>
    </interactant>
    <interactant intactId="EBI-2349758">
        <id>Q86WP2</id>
        <label>GPBP1</label>
    </interactant>
    <organismsDiffer>false</organismsDiffer>
    <experiments>3</experiments>
</comment>
<comment type="interaction">
    <interactant intactId="EBI-742388">
        <id>Q9H8W4</id>
    </interactant>
    <interactant intactId="EBI-10962409">
        <id>Q6IC98</id>
        <label>GRAMD4</label>
    </interactant>
    <organismsDiffer>false</organismsDiffer>
    <experiments>3</experiments>
</comment>
<comment type="interaction">
    <interactant intactId="EBI-742388">
        <id>Q9H8W4</id>
    </interactant>
    <interactant intactId="EBI-6115579">
        <id>Q9BX10</id>
        <label>GTPBP2</label>
    </interactant>
    <organismsDiffer>false</organismsDiffer>
    <experiments>3</experiments>
</comment>
<comment type="interaction">
    <interactant intactId="EBI-742388">
        <id>Q9H8W4</id>
    </interactant>
    <interactant intactId="EBI-741593">
        <id>Q9Y5Z4</id>
        <label>HEBP2</label>
    </interactant>
    <organismsDiffer>false</organismsDiffer>
    <experiments>3</experiments>
</comment>
<comment type="interaction">
    <interactant intactId="EBI-742388">
        <id>Q9H8W4</id>
    </interactant>
    <interactant intactId="EBI-739361">
        <id>Q9UBY9</id>
        <label>HSPB7</label>
    </interactant>
    <organismsDiffer>false</organismsDiffer>
    <experiments>6</experiments>
</comment>
<comment type="interaction">
    <interactant intactId="EBI-742388">
        <id>Q9H8W4</id>
    </interactant>
    <interactant intactId="EBI-769345">
        <id>Q9ULG1</id>
        <label>INO80</label>
    </interactant>
    <organismsDiffer>false</organismsDiffer>
    <experiments>3</experiments>
</comment>
<comment type="interaction">
    <interactant intactId="EBI-742388">
        <id>Q9H8W4</id>
    </interactant>
    <interactant intactId="EBI-12050557">
        <id>O43448</id>
        <label>KCNAB3</label>
    </interactant>
    <organismsDiffer>false</organismsDiffer>
    <experiments>3</experiments>
</comment>
<comment type="interaction">
    <interactant intactId="EBI-742388">
        <id>Q9H8W4</id>
    </interactant>
    <interactant intactId="EBI-12810853">
        <id>Q8TAV5</id>
        <label>KCNJ5-AS1</label>
    </interactant>
    <organismsDiffer>false</organismsDiffer>
    <experiments>3</experiments>
</comment>
<comment type="interaction">
    <interactant intactId="EBI-742388">
        <id>Q9H8W4</id>
    </interactant>
    <interactant intactId="EBI-22731520">
        <id>Q587J8</id>
        <label>KHDC3L</label>
    </interactant>
    <organismsDiffer>false</organismsDiffer>
    <experiments>3</experiments>
</comment>
<comment type="interaction">
    <interactant intactId="EBI-742388">
        <id>Q9H8W4</id>
    </interactant>
    <interactant intactId="EBI-11955579">
        <id>P60014</id>
        <label>KRTAP10-10</label>
    </interactant>
    <organismsDiffer>false</organismsDiffer>
    <experiments>3</experiments>
</comment>
<comment type="interaction">
    <interactant intactId="EBI-742388">
        <id>Q9H8W4</id>
    </interactant>
    <interactant intactId="EBI-11963072">
        <id>Q6L8H1</id>
        <label>KRTAP5-4</label>
    </interactant>
    <organismsDiffer>false</organismsDiffer>
    <experiments>3</experiments>
</comment>
<comment type="interaction">
    <interactant intactId="EBI-742388">
        <id>Q9H8W4</id>
    </interactant>
    <interactant intactId="EBI-2686809">
        <id>Q96JM7</id>
        <label>L3MBTL3</label>
    </interactant>
    <organismsDiffer>false</organismsDiffer>
    <experiments>3</experiments>
</comment>
<comment type="interaction">
    <interactant intactId="EBI-742388">
        <id>Q9H8W4</id>
    </interactant>
    <interactant intactId="EBI-11985629">
        <id>Q96JM7-2</id>
        <label>L3MBTL3</label>
    </interactant>
    <organismsDiffer>false</organismsDiffer>
    <experiments>3</experiments>
</comment>
<comment type="interaction">
    <interactant intactId="EBI-742388">
        <id>Q9H8W4</id>
    </interactant>
    <interactant intactId="EBI-740738">
        <id>O95751</id>
        <label>LDOC1</label>
    </interactant>
    <organismsDiffer>false</organismsDiffer>
    <experiments>5</experiments>
</comment>
<comment type="interaction">
    <interactant intactId="EBI-742388">
        <id>Q9H8W4</id>
    </interactant>
    <interactant intactId="EBI-12081182">
        <id>Q86UL8-2</id>
        <label>MAGI2</label>
    </interactant>
    <organismsDiffer>false</organismsDiffer>
    <experiments>3</experiments>
</comment>
<comment type="interaction">
    <interactant intactId="EBI-742388">
        <id>Q9H8W4</id>
    </interactant>
    <interactant intactId="EBI-492564">
        <id>Q02750</id>
        <label>MAP2K1</label>
    </interactant>
    <organismsDiffer>false</organismsDiffer>
    <experiments>3</experiments>
</comment>
<comment type="interaction">
    <interactant intactId="EBI-742388">
        <id>Q9H8W4</id>
    </interactant>
    <interactant intactId="EBI-751711">
        <id>P61244</id>
        <label>MAX</label>
    </interactant>
    <organismsDiffer>false</organismsDiffer>
    <experiments>4</experiments>
</comment>
<comment type="interaction">
    <interactant intactId="EBI-742388">
        <id>Q9H8W4</id>
    </interactant>
    <interactant intactId="EBI-741953">
        <id>Q9NS73</id>
        <label>MBIP</label>
    </interactant>
    <organismsDiffer>false</organismsDiffer>
    <experiments>3</experiments>
</comment>
<comment type="interaction">
    <interactant intactId="EBI-742388">
        <id>Q9H8W4</id>
    </interactant>
    <interactant intactId="EBI-10182361">
        <id>Q9NS73-5</id>
        <label>MBIP</label>
    </interactant>
    <organismsDiffer>false</organismsDiffer>
    <experiments>3</experiments>
</comment>
<comment type="interaction">
    <interactant intactId="EBI-742388">
        <id>Q9H8W4</id>
    </interactant>
    <interactant intactId="EBI-12159027">
        <id>P02686-2</id>
        <label>MBP</label>
    </interactant>
    <organismsDiffer>false</organismsDiffer>
    <experiments>3</experiments>
</comment>
<comment type="interaction">
    <interactant intactId="EBI-742388">
        <id>Q9H8W4</id>
    </interactant>
    <interactant intactId="EBI-399266">
        <id>Q9HAF1</id>
        <label>MEAF6</label>
    </interactant>
    <organismsDiffer>false</organismsDiffer>
    <experiments>5</experiments>
</comment>
<comment type="interaction">
    <interactant intactId="EBI-742388">
        <id>Q9H8W4</id>
    </interactant>
    <interactant intactId="EBI-1048159">
        <id>P55081</id>
        <label>MFAP1</label>
    </interactant>
    <organismsDiffer>false</organismsDiffer>
    <experiments>3</experiments>
</comment>
<comment type="interaction">
    <interactant intactId="EBI-742388">
        <id>Q9H8W4</id>
    </interactant>
    <interactant intactId="EBI-7153979">
        <id>Q504T8</id>
        <label>MIDN</label>
    </interactant>
    <organismsDiffer>false</organismsDiffer>
    <experiments>3</experiments>
</comment>
<comment type="interaction">
    <interactant intactId="EBI-742388">
        <id>Q9H8W4</id>
    </interactant>
    <interactant intactId="EBI-742459">
        <id>Q9BU76</id>
        <label>MMTAG2</label>
    </interactant>
    <organismsDiffer>false</organismsDiffer>
    <experiments>3</experiments>
</comment>
<comment type="interaction">
    <interactant intactId="EBI-742388">
        <id>Q9H8W4</id>
    </interactant>
    <interactant intactId="EBI-18924629">
        <id>A2RU80</id>
        <label>MPP4</label>
    </interactant>
    <organismsDiffer>false</organismsDiffer>
    <experiments>3</experiments>
</comment>
<comment type="interaction">
    <interactant intactId="EBI-742388">
        <id>Q9H8W4</id>
    </interactant>
    <interactant intactId="EBI-747381">
        <id>Q9BV20</id>
        <label>MRI1</label>
    </interactant>
    <organismsDiffer>false</organismsDiffer>
    <experiments>3</experiments>
</comment>
<comment type="interaction">
    <interactant intactId="EBI-742388">
        <id>Q9H8W4</id>
    </interactant>
    <interactant intactId="EBI-746417">
        <id>Q16718</id>
        <label>NDUFA5</label>
    </interactant>
    <organismsDiffer>false</organismsDiffer>
    <experiments>3</experiments>
</comment>
<comment type="interaction">
    <interactant intactId="EBI-742388">
        <id>Q9H8W4</id>
    </interactant>
    <interactant intactId="EBI-12119652">
        <id>Q12857-2</id>
        <label>NFIA</label>
    </interactant>
    <organismsDiffer>false</organismsDiffer>
    <experiments>3</experiments>
</comment>
<comment type="interaction">
    <interactant intactId="EBI-742388">
        <id>Q9H8W4</id>
    </interactant>
    <interactant intactId="EBI-6658150">
        <id>Q86SE8</id>
        <label>NPM2</label>
    </interactant>
    <organismsDiffer>false</organismsDiffer>
    <experiments>3</experiments>
</comment>
<comment type="interaction">
    <interactant intactId="EBI-742388">
        <id>Q9H8W4</id>
    </interactant>
    <interactant intactId="EBI-12193061">
        <id>Q86SE8-2</id>
        <label>NPM2</label>
    </interactant>
    <organismsDiffer>false</organismsDiffer>
    <experiments>3</experiments>
</comment>
<comment type="interaction">
    <interactant intactId="EBI-742388">
        <id>Q9H8W4</id>
    </interactant>
    <interactant intactId="EBI-2693298">
        <id>O96028</id>
        <label>NSD2</label>
    </interactant>
    <organismsDiffer>false</organismsDiffer>
    <experiments>3</experiments>
</comment>
<comment type="interaction">
    <interactant intactId="EBI-742388">
        <id>Q9H8W4</id>
    </interactant>
    <interactant intactId="EBI-10096247">
        <id>P50583</id>
        <label>NUDT2</label>
    </interactant>
    <organismsDiffer>false</organismsDiffer>
    <experiments>3</experiments>
</comment>
<comment type="interaction">
    <interactant intactId="EBI-742388">
        <id>Q9H8W4</id>
    </interactant>
    <interactant intactId="EBI-1753251">
        <id>Q99572</id>
        <label>P2RX7</label>
    </interactant>
    <organismsDiffer>false</organismsDiffer>
    <experiments>3</experiments>
</comment>
<comment type="interaction">
    <interactant intactId="EBI-742388">
        <id>Q9H8W4</id>
    </interactant>
    <interactant intactId="EBI-721769">
        <id>Q9BY11</id>
        <label>PACSIN1</label>
    </interactant>
    <organismsDiffer>false</organismsDiffer>
    <experiments>3</experiments>
</comment>
<comment type="interaction">
    <interactant intactId="EBI-742388">
        <id>Q9H8W4</id>
    </interactant>
    <interactant intactId="EBI-7641942">
        <id>Q9NWT1</id>
        <label>PAK1IP1</label>
    </interactant>
    <organismsDiffer>false</organismsDiffer>
    <experiments>3</experiments>
</comment>
<comment type="interaction">
    <interactant intactId="EBI-742388">
        <id>Q9H8W4</id>
    </interactant>
    <interactant intactId="EBI-2861674">
        <id>Q16654</id>
        <label>PDK4</label>
    </interactant>
    <organismsDiffer>false</organismsDiffer>
    <experiments>3</experiments>
</comment>
<comment type="interaction">
    <interactant intactId="EBI-742388">
        <id>Q9H8W4</id>
    </interactant>
    <interactant intactId="EBI-79893">
        <id>Q92569</id>
        <label>PIK3R3</label>
    </interactant>
    <organismsDiffer>false</organismsDiffer>
    <experiments>3</experiments>
</comment>
<comment type="interaction">
    <interactant intactId="EBI-742388">
        <id>Q9H8W4</id>
    </interactant>
    <interactant intactId="EBI-724333">
        <id>Q96CD2</id>
        <label>PPCDC</label>
    </interactant>
    <organismsDiffer>false</organismsDiffer>
    <experiments>3</experiments>
</comment>
<comment type="interaction">
    <interactant intactId="EBI-742388">
        <id>Q9H8W4</id>
    </interactant>
    <interactant intactId="EBI-2557469">
        <id>Q6NYC8</id>
        <label>PPP1R18</label>
    </interactant>
    <organismsDiffer>false</organismsDiffer>
    <experiments>3</experiments>
</comment>
<comment type="interaction">
    <interactant intactId="EBI-742388">
        <id>Q9H8W4</id>
    </interactant>
    <interactant intactId="EBI-1181439">
        <id>P54619</id>
        <label>PRKAG1</label>
    </interactant>
    <organismsDiffer>false</organismsDiffer>
    <experiments>3</experiments>
</comment>
<comment type="interaction">
    <interactant intactId="EBI-742388">
        <id>Q9H8W4</id>
    </interactant>
    <interactant intactId="EBI-476431">
        <id>P10644</id>
        <label>PRKAR1A</label>
    </interactant>
    <organismsDiffer>false</organismsDiffer>
    <experiments>3</experiments>
</comment>
<comment type="interaction">
    <interactant intactId="EBI-742388">
        <id>Q9H8W4</id>
    </interactant>
    <interactant intactId="EBI-1047946">
        <id>P26045</id>
        <label>PTPN3</label>
    </interactant>
    <organismsDiffer>false</organismsDiffer>
    <experiments>3</experiments>
</comment>
<comment type="interaction">
    <interactant intactId="EBI-742388">
        <id>Q9H8W4</id>
    </interactant>
    <interactant intactId="EBI-18924849">
        <id>Q96N64-2</id>
        <label>PWWP2A</label>
    </interactant>
    <organismsDiffer>false</organismsDiffer>
    <experiments>3</experiments>
</comment>
<comment type="interaction">
    <interactant intactId="EBI-742388">
        <id>Q9H8W4</id>
    </interactant>
    <interactant intactId="EBI-11898753">
        <id>P51157</id>
        <label>RAB28</label>
    </interactant>
    <organismsDiffer>false</organismsDiffer>
    <experiments>3</experiments>
</comment>
<comment type="interaction">
    <interactant intactId="EBI-742388">
        <id>Q9H8W4</id>
    </interactant>
    <interactant intactId="EBI-12315199">
        <id>Q5JT25-2</id>
        <label>RAB41</label>
    </interactant>
    <organismsDiffer>false</organismsDiffer>
    <experiments>3</experiments>
</comment>
<comment type="interaction">
    <interactant intactId="EBI-742388">
        <id>Q9H8W4</id>
    </interactant>
    <interactant intactId="EBI-712367">
        <id>Q9UI14</id>
        <label>RABAC1</label>
    </interactant>
    <organismsDiffer>false</organismsDiffer>
    <experiments>3</experiments>
</comment>
<comment type="interaction">
    <interactant intactId="EBI-742388">
        <id>Q9H8W4</id>
    </interactant>
    <interactant intactId="EBI-413374">
        <id>P10276</id>
        <label>RARA</label>
    </interactant>
    <organismsDiffer>false</organismsDiffer>
    <experiments>3</experiments>
</comment>
<comment type="interaction">
    <interactant intactId="EBI-742388">
        <id>Q9H8W4</id>
    </interactant>
    <interactant intactId="EBI-12013954">
        <id>Q0VAM2-3</id>
        <label>RASGEF1B</label>
    </interactant>
    <organismsDiffer>false</organismsDiffer>
    <experiments>3</experiments>
</comment>
<comment type="interaction">
    <interactant intactId="EBI-742388">
        <id>Q9H8W4</id>
    </interactant>
    <interactant intactId="EBI-1057034">
        <id>O43665</id>
        <label>RGS10</label>
    </interactant>
    <organismsDiffer>false</organismsDiffer>
    <experiments>3</experiments>
</comment>
<comment type="interaction">
    <interactant intactId="EBI-742388">
        <id>Q9H8W4</id>
    </interactant>
    <interactant intactId="EBI-12058229">
        <id>P57771-2</id>
        <label>RGS8</label>
    </interactant>
    <organismsDiffer>false</organismsDiffer>
    <experiments>3</experiments>
</comment>
<comment type="interaction">
    <interactant intactId="EBI-742388">
        <id>Q9H8W4</id>
    </interactant>
    <interactant intactId="EBI-395878">
        <id>Q8IXW5</id>
        <label>RPAP2</label>
    </interactant>
    <organismsDiffer>false</organismsDiffer>
    <experiments>3</experiments>
</comment>
<comment type="interaction">
    <interactant intactId="EBI-742388">
        <id>Q9H8W4</id>
    </interactant>
    <interactant intactId="EBI-372480">
        <id>Q96AT9</id>
        <label>RPE</label>
    </interactant>
    <organismsDiffer>false</organismsDiffer>
    <experiments>3</experiments>
</comment>
<comment type="interaction">
    <interactant intactId="EBI-742388">
        <id>Q9H8W4</id>
    </interactant>
    <interactant intactId="EBI-1052363">
        <id>Q9NS64</id>
        <label>RPRM</label>
    </interactant>
    <organismsDiffer>false</organismsDiffer>
    <experiments>3</experiments>
</comment>
<comment type="interaction">
    <interactant intactId="EBI-742388">
        <id>Q9H8W4</id>
    </interactant>
    <interactant intactId="EBI-714051">
        <id>P63220</id>
        <label>RPS21</label>
    </interactant>
    <organismsDiffer>false</organismsDiffer>
    <experiments>6</experiments>
</comment>
<comment type="interaction">
    <interactant intactId="EBI-742388">
        <id>Q9H8W4</id>
    </interactant>
    <interactant intactId="EBI-8481036">
        <id>Q6UXX9</id>
        <label>RSPO2</label>
    </interactant>
    <organismsDiffer>false</organismsDiffer>
    <experiments>3</experiments>
</comment>
<comment type="interaction">
    <interactant intactId="EBI-742388">
        <id>Q9H8W4</id>
    </interactant>
    <interactant intactId="EBI-743686">
        <id>P23297</id>
        <label>S100A1</label>
    </interactant>
    <organismsDiffer>false</organismsDiffer>
    <experiments>3</experiments>
</comment>
<comment type="interaction">
    <interactant intactId="EBI-742388">
        <id>Q9H8W4</id>
    </interactant>
    <interactant intactId="EBI-721909">
        <id>Q99584</id>
        <label>S100A13</label>
    </interactant>
    <organismsDiffer>false</organismsDiffer>
    <experiments>3</experiments>
</comment>
<comment type="interaction">
    <interactant intactId="EBI-742388">
        <id>Q9H8W4</id>
    </interactant>
    <interactant intactId="EBI-14067109">
        <id>Q96NU1</id>
        <label>SAMD11</label>
    </interactant>
    <organismsDiffer>false</organismsDiffer>
    <experiments>3</experiments>
</comment>
<comment type="interaction">
    <interactant intactId="EBI-742388">
        <id>Q9H8W4</id>
    </interactant>
    <interactant intactId="EBI-12023020">
        <id>Q96KG9-4</id>
        <label>SCYL1</label>
    </interactant>
    <organismsDiffer>false</organismsDiffer>
    <experiments>3</experiments>
</comment>
<comment type="interaction">
    <interactant intactId="EBI-742388">
        <id>Q9H8W4</id>
    </interactant>
    <interactant intactId="EBI-10320311">
        <id>Q9UDX3</id>
        <label>SEC14L4</label>
    </interactant>
    <organismsDiffer>false</organismsDiffer>
    <experiments>3</experiments>
</comment>
<comment type="interaction">
    <interactant intactId="EBI-742388">
        <id>Q9H8W4</id>
    </interactant>
    <interactant intactId="EBI-741220">
        <id>Q15019</id>
        <label>SEPTIN2</label>
    </interactant>
    <organismsDiffer>false</organismsDiffer>
    <experiments>3</experiments>
</comment>
<comment type="interaction">
    <interactant intactId="EBI-742388">
        <id>Q9H8W4</id>
    </interactant>
    <interactant intactId="EBI-745901">
        <id>Q14141</id>
        <label>SEPTIN6</label>
    </interactant>
    <organismsDiffer>false</organismsDiffer>
    <experiments>3</experiments>
</comment>
<comment type="interaction">
    <interactant intactId="EBI-742388">
        <id>Q9H8W4</id>
    </interactant>
    <interactant intactId="EBI-2548259">
        <id>Q9Y6X0</id>
        <label>SETBP1</label>
    </interactant>
    <organismsDiffer>false</organismsDiffer>
    <experiments>3</experiments>
</comment>
<comment type="interaction">
    <interactant intactId="EBI-742388">
        <id>Q9H8W4</id>
    </interactant>
    <interactant intactId="EBI-12235818">
        <id>Q9Y6X0-2</id>
        <label>SETBP1</label>
    </interactant>
    <organismsDiffer>false</organismsDiffer>
    <experiments>6</experiments>
</comment>
<comment type="interaction">
    <interactant intactId="EBI-742388">
        <id>Q9H8W4</id>
    </interactant>
    <interactant intactId="EBI-12938570">
        <id>Q16560-2</id>
        <label>SNRNP35</label>
    </interactant>
    <organismsDiffer>false</organismsDiffer>
    <experiments>3</experiments>
</comment>
<comment type="interaction">
    <interactant intactId="EBI-742388">
        <id>Q9H8W4</id>
    </interactant>
    <interactant intactId="EBI-5746563">
        <id>Q9BQB4</id>
        <label>SOST</label>
    </interactant>
    <organismsDiffer>false</organismsDiffer>
    <experiments>3</experiments>
</comment>
<comment type="interaction">
    <interactant intactId="EBI-742388">
        <id>Q9H8W4</id>
    </interactant>
    <interactant intactId="EBI-12041693">
        <id>Q86W54-2</id>
        <label>SPATA24</label>
    </interactant>
    <organismsDiffer>false</organismsDiffer>
    <experiments>3</experiments>
</comment>
<comment type="interaction">
    <interactant intactId="EBI-742388">
        <id>Q9H8W4</id>
    </interactant>
    <interactant intactId="EBI-12303571">
        <id>Q9Y4P9-2</id>
        <label>SPEF1</label>
    </interactant>
    <organismsDiffer>false</organismsDiffer>
    <experiments>3</experiments>
</comment>
<comment type="interaction">
    <interactant intactId="EBI-742388">
        <id>Q9H8W4</id>
    </interactant>
    <interactant intactId="EBI-10298801">
        <id>Q9BUD6</id>
        <label>SPON2</label>
    </interactant>
    <organismsDiffer>false</organismsDiffer>
    <experiments>3</experiments>
</comment>
<comment type="interaction">
    <interactant intactId="EBI-742388">
        <id>Q9H8W4</id>
    </interactant>
    <interactant intactId="EBI-745021">
        <id>Q96FJ0</id>
        <label>STAMBPL1</label>
    </interactant>
    <organismsDiffer>false</organismsDiffer>
    <experiments>3</experiments>
</comment>
<comment type="interaction">
    <interactant intactId="EBI-742388">
        <id>Q9H8W4</id>
    </interactant>
    <interactant intactId="EBI-992580">
        <id>Q13188</id>
        <label>STK3</label>
    </interactant>
    <organismsDiffer>false</organismsDiffer>
    <experiments>3</experiments>
</comment>
<comment type="interaction">
    <interactant intactId="EBI-742388">
        <id>Q9H8W4</id>
    </interactant>
    <interactant intactId="EBI-10238936">
        <id>Q17RD7</id>
        <label>SYT16</label>
    </interactant>
    <organismsDiffer>false</organismsDiffer>
    <experiments>3</experiments>
</comment>
<comment type="interaction">
    <interactant intactId="EBI-742388">
        <id>Q9H8W4</id>
    </interactant>
    <interactant intactId="EBI-10244795">
        <id>Q5QJ74</id>
        <label>TBCEL</label>
    </interactant>
    <organismsDiffer>false</organismsDiffer>
    <experiments>3</experiments>
</comment>
<comment type="interaction">
    <interactant intactId="EBI-742388">
        <id>Q9H8W4</id>
    </interactant>
    <interactant intactId="EBI-954089">
        <id>O15273</id>
        <label>TCAP</label>
    </interactant>
    <organismsDiffer>false</organismsDiffer>
    <experiments>3</experiments>
</comment>
<comment type="interaction">
    <interactant intactId="EBI-742388">
        <id>Q9H8W4</id>
    </interactant>
    <interactant intactId="EBI-11955057">
        <id>Q8N8B7-2</id>
        <label>TCEANC</label>
    </interactant>
    <organismsDiffer>false</organismsDiffer>
    <experiments>3</experiments>
</comment>
<comment type="interaction">
    <interactant intactId="EBI-742388">
        <id>Q9H8W4</id>
    </interactant>
    <interactant intactId="EBI-745404">
        <id>Q9P2Z0</id>
        <label>THAP10</label>
    </interactant>
    <organismsDiffer>false</organismsDiffer>
    <experiments>3</experiments>
</comment>
<comment type="interaction">
    <interactant intactId="EBI-742388">
        <id>Q9H8W4</id>
    </interactant>
    <interactant intactId="EBI-746510">
        <id>Q9NWX6</id>
        <label>THG1L</label>
    </interactant>
    <organismsDiffer>false</organismsDiffer>
    <experiments>3</experiments>
</comment>
<comment type="interaction">
    <interactant intactId="EBI-742388">
        <id>Q9H8W4</id>
    </interactant>
    <interactant intactId="EBI-1049336">
        <id>O95379</id>
        <label>TNFAIP8</label>
    </interactant>
    <organismsDiffer>false</organismsDiffer>
    <experiments>4</experiments>
</comment>
<comment type="interaction">
    <interactant intactId="EBI-742388">
        <id>Q9H8W4</id>
    </interactant>
    <interactant intactId="EBI-752102">
        <id>Q8WVP5</id>
        <label>TNFAIP8L1</label>
    </interactant>
    <organismsDiffer>false</organismsDiffer>
    <experiments>3</experiments>
</comment>
<comment type="interaction">
    <interactant intactId="EBI-742388">
        <id>Q9H8W4</id>
    </interactant>
    <interactant intactId="EBI-11952721">
        <id>Q05BL1</id>
        <label>TP53BP2</label>
    </interactant>
    <organismsDiffer>false</organismsDiffer>
    <experiments>3</experiments>
</comment>
<comment type="interaction">
    <interactant intactId="EBI-742388">
        <id>Q9H8W4</id>
    </interactant>
    <interactant intactId="EBI-359276">
        <id>Q9Y4K3</id>
        <label>TRAF6</label>
    </interactant>
    <organismsDiffer>false</organismsDiffer>
    <experiments>3</experiments>
</comment>
<comment type="interaction">
    <interactant intactId="EBI-742388">
        <id>Q9H8W4</id>
    </interactant>
    <interactant intactId="EBI-11996766">
        <id>Q8N609</id>
        <label>TRAM1L1</label>
    </interactant>
    <organismsDiffer>false</organismsDiffer>
    <experiments>3</experiments>
</comment>
<comment type="interaction">
    <interactant intactId="EBI-742388">
        <id>Q9H8W4</id>
    </interactant>
    <interactant intactId="EBI-743566">
        <id>O43617</id>
        <label>TRAPPC3</label>
    </interactant>
    <organismsDiffer>false</organismsDiffer>
    <experiments>3</experiments>
</comment>
<comment type="interaction">
    <interactant intactId="EBI-742388">
        <id>Q9H8W4</id>
    </interactant>
    <interactant intactId="EBI-2820212">
        <id>O43715</id>
        <label>TRIAP1</label>
    </interactant>
    <organismsDiffer>false</organismsDiffer>
    <experiments>3</experiments>
</comment>
<comment type="interaction">
    <interactant intactId="EBI-742388">
        <id>Q9H8W4</id>
    </interactant>
    <interactant intactId="EBI-954123">
        <id>Q8IYM9</id>
        <label>TRIM22</label>
    </interactant>
    <organismsDiffer>false</organismsDiffer>
    <experiments>3</experiments>
</comment>
<comment type="interaction">
    <interactant intactId="EBI-742388">
        <id>Q9H8W4</id>
    </interactant>
    <interactant intactId="EBI-2851213">
        <id>Q8N5M4</id>
        <label>TTC9C</label>
    </interactant>
    <organismsDiffer>false</organismsDiffer>
    <experiments>3</experiments>
</comment>
<comment type="interaction">
    <interactant intactId="EBI-742388">
        <id>Q9H8W4</id>
    </interactant>
    <interactant intactId="EBI-10309345">
        <id>Q9NX01</id>
        <label>TXNL4B</label>
    </interactant>
    <organismsDiffer>false</organismsDiffer>
    <experiments>3</experiments>
</comment>
<comment type="interaction">
    <interactant intactId="EBI-742388">
        <id>Q9H8W4</id>
    </interactant>
    <interactant intactId="EBI-720977">
        <id>Q9H832</id>
        <label>UBE2Z</label>
    </interactant>
    <organismsDiffer>false</organismsDiffer>
    <experiments>9</experiments>
</comment>
<comment type="interaction">
    <interactant intactId="EBI-742388">
        <id>Q9H8W4</id>
    </interactant>
    <interactant intactId="EBI-743729">
        <id>Q16851</id>
        <label>UGP2</label>
    </interactant>
    <organismsDiffer>false</organismsDiffer>
    <experiments>3</experiments>
</comment>
<comment type="interaction">
    <interactant intactId="EBI-742388">
        <id>Q9H8W4</id>
    </interactant>
    <interactant intactId="EBI-12960721">
        <id>P46094</id>
        <label>XCR1</label>
    </interactant>
    <organismsDiffer>false</organismsDiffer>
    <experiments>3</experiments>
</comment>
<comment type="interaction">
    <interactant intactId="EBI-742388">
        <id>Q9H8W4</id>
    </interactant>
    <interactant intactId="EBI-372110">
        <id>Q9H0D6</id>
        <label>XRN2</label>
    </interactant>
    <organismsDiffer>false</organismsDiffer>
    <experiments>3</experiments>
</comment>
<comment type="interaction">
    <interactant intactId="EBI-742388">
        <id>Q9H8W4</id>
    </interactant>
    <interactant intactId="EBI-2799703">
        <id>O95070</id>
        <label>YIF1A</label>
    </interactant>
    <organismsDiffer>false</organismsDiffer>
    <experiments>3</experiments>
</comment>
<comment type="interaction">
    <interactant intactId="EBI-742388">
        <id>Q9H8W4</id>
    </interactant>
    <interactant intactId="EBI-765538">
        <id>P25490</id>
        <label>YY1</label>
    </interactant>
    <organismsDiffer>false</organismsDiffer>
    <experiments>3</experiments>
</comment>
<comment type="interaction">
    <interactant intactId="EBI-742388">
        <id>Q9H8W4</id>
    </interactant>
    <interactant intactId="EBI-7227791">
        <id>Q15916</id>
        <label>ZBTB6</label>
    </interactant>
    <organismsDiffer>false</organismsDiffer>
    <experiments>6</experiments>
</comment>
<comment type="interaction">
    <interactant intactId="EBI-742388">
        <id>Q9H8W4</id>
    </interactant>
    <interactant intactId="EBI-10254561">
        <id>Q6UX98</id>
        <label>ZDHHC24</label>
    </interactant>
    <organismsDiffer>false</organismsDiffer>
    <experiments>3</experiments>
</comment>
<comment type="interaction">
    <interactant intactId="EBI-742388">
        <id>Q9H8W4</id>
    </interactant>
    <interactant intactId="EBI-8656416">
        <id>Q68DK2-5</id>
        <label>ZFYVE26</label>
    </interactant>
    <organismsDiffer>false</organismsDiffer>
    <experiments>3</experiments>
</comment>
<comment type="interaction">
    <interactant intactId="EBI-742388">
        <id>Q9H8W4</id>
    </interactant>
    <interactant intactId="EBI-741694">
        <id>P49910</id>
        <label>ZNF165</label>
    </interactant>
    <organismsDiffer>false</organismsDiffer>
    <experiments>3</experiments>
</comment>
<comment type="interaction">
    <interactant intactId="EBI-742388">
        <id>Q9H8W4</id>
    </interactant>
    <interactant intactId="EBI-10177272">
        <id>P15622-3</id>
        <label>ZNF250</label>
    </interactant>
    <organismsDiffer>false</organismsDiffer>
    <experiments>3</experiments>
</comment>
<comment type="interaction">
    <interactant intactId="EBI-742388">
        <id>Q9H8W4</id>
    </interactant>
    <interactant intactId="EBI-8643207">
        <id>Q8TD17</id>
        <label>ZNF398</label>
    </interactant>
    <organismsDiffer>false</organismsDiffer>
    <experiments>3</experiments>
</comment>
<comment type="interaction">
    <interactant intactId="EBI-742388">
        <id>Q9H8W4</id>
    </interactant>
    <interactant intactId="EBI-747580">
        <id>Q8NDP4</id>
        <label>ZNF439</label>
    </interactant>
    <organismsDiffer>false</organismsDiffer>
    <experiments>3</experiments>
</comment>
<comment type="interaction">
    <interactant intactId="EBI-742388">
        <id>Q9H8W4</id>
    </interactant>
    <interactant intactId="EBI-745520">
        <id>Q9P0T4</id>
        <label>ZNF581</label>
    </interactant>
    <organismsDiffer>false</organismsDiffer>
    <experiments>3</experiments>
</comment>
<comment type="subcellular location">
    <subcellularLocation>
        <location evidence="5 6">Early endosome membrane</location>
        <topology evidence="7 8">Peripheral membrane protein</topology>
    </subcellularLocation>
    <subcellularLocation>
        <location evidence="4">Endoplasmic reticulum</location>
    </subcellularLocation>
    <text evidence="4 5">Colocalizes with EEA1 and RAB5 at endosomal membrane fusion hot spots (PubMed:19995552). May translocate to the endoplasmic reticulum in the early phase of apoptosis (PubMed:18288467).</text>
</comment>
<comment type="tissue specificity">
    <text evidence="4">Expressed in placenta, ovary and small intestine, as well as in heart and pancreas. Also expressed in peripheral blood mononuclear cells and dendritic cells.</text>
</comment>
<comment type="induction">
    <text evidence="4">Up-regulated by TNF, bacterial lipopolysaccharides (LPS) and phorbol myristate acetate (PMA) (at protein level).</text>
</comment>
<comment type="domain">
    <text evidence="4">The PH and FYVE domains may be important for TNF-induced localization to the endoplasmic reticulum and for enhanced cellular sensitivity to TNF-induced apoptosis (PubMed:18288467). The FYVE domain is important for binding to the endosomal membrane.</text>
</comment>
<gene>
    <name type="primary">PLEKHF2</name>
    <name type="synonym">ZFYVE18</name>
</gene>
<reference key="1">
    <citation type="submission" date="2001-10" db="EMBL/GenBank/DDBJ databases">
        <title>Phafin 2, PH and FYVE domain-containing protein 2.</title>
        <authorList>
            <person name="Shi H."/>
            <person name="Hong W."/>
        </authorList>
    </citation>
    <scope>NUCLEOTIDE SEQUENCE [MRNA]</scope>
</reference>
<reference key="2">
    <citation type="journal article" date="2004" name="Nat. Genet.">
        <title>Complete sequencing and characterization of 21,243 full-length human cDNAs.</title>
        <authorList>
            <person name="Ota T."/>
            <person name="Suzuki Y."/>
            <person name="Nishikawa T."/>
            <person name="Otsuki T."/>
            <person name="Sugiyama T."/>
            <person name="Irie R."/>
            <person name="Wakamatsu A."/>
            <person name="Hayashi K."/>
            <person name="Sato H."/>
            <person name="Nagai K."/>
            <person name="Kimura K."/>
            <person name="Makita H."/>
            <person name="Sekine M."/>
            <person name="Obayashi M."/>
            <person name="Nishi T."/>
            <person name="Shibahara T."/>
            <person name="Tanaka T."/>
            <person name="Ishii S."/>
            <person name="Yamamoto J."/>
            <person name="Saito K."/>
            <person name="Kawai Y."/>
            <person name="Isono Y."/>
            <person name="Nakamura Y."/>
            <person name="Nagahari K."/>
            <person name="Murakami K."/>
            <person name="Yasuda T."/>
            <person name="Iwayanagi T."/>
            <person name="Wagatsuma M."/>
            <person name="Shiratori A."/>
            <person name="Sudo H."/>
            <person name="Hosoiri T."/>
            <person name="Kaku Y."/>
            <person name="Kodaira H."/>
            <person name="Kondo H."/>
            <person name="Sugawara M."/>
            <person name="Takahashi M."/>
            <person name="Kanda K."/>
            <person name="Yokoi T."/>
            <person name="Furuya T."/>
            <person name="Kikkawa E."/>
            <person name="Omura Y."/>
            <person name="Abe K."/>
            <person name="Kamihara K."/>
            <person name="Katsuta N."/>
            <person name="Sato K."/>
            <person name="Tanikawa M."/>
            <person name="Yamazaki M."/>
            <person name="Ninomiya K."/>
            <person name="Ishibashi T."/>
            <person name="Yamashita H."/>
            <person name="Murakawa K."/>
            <person name="Fujimori K."/>
            <person name="Tanai H."/>
            <person name="Kimata M."/>
            <person name="Watanabe M."/>
            <person name="Hiraoka S."/>
            <person name="Chiba Y."/>
            <person name="Ishida S."/>
            <person name="Ono Y."/>
            <person name="Takiguchi S."/>
            <person name="Watanabe S."/>
            <person name="Yosida M."/>
            <person name="Hotuta T."/>
            <person name="Kusano J."/>
            <person name="Kanehori K."/>
            <person name="Takahashi-Fujii A."/>
            <person name="Hara H."/>
            <person name="Tanase T.-O."/>
            <person name="Nomura Y."/>
            <person name="Togiya S."/>
            <person name="Komai F."/>
            <person name="Hara R."/>
            <person name="Takeuchi K."/>
            <person name="Arita M."/>
            <person name="Imose N."/>
            <person name="Musashino K."/>
            <person name="Yuuki H."/>
            <person name="Oshima A."/>
            <person name="Sasaki N."/>
            <person name="Aotsuka S."/>
            <person name="Yoshikawa Y."/>
            <person name="Matsunawa H."/>
            <person name="Ichihara T."/>
            <person name="Shiohata N."/>
            <person name="Sano S."/>
            <person name="Moriya S."/>
            <person name="Momiyama H."/>
            <person name="Satoh N."/>
            <person name="Takami S."/>
            <person name="Terashima Y."/>
            <person name="Suzuki O."/>
            <person name="Nakagawa S."/>
            <person name="Senoh A."/>
            <person name="Mizoguchi H."/>
            <person name="Goto Y."/>
            <person name="Shimizu F."/>
            <person name="Wakebe H."/>
            <person name="Hishigaki H."/>
            <person name="Watanabe T."/>
            <person name="Sugiyama A."/>
            <person name="Takemoto M."/>
            <person name="Kawakami B."/>
            <person name="Yamazaki M."/>
            <person name="Watanabe K."/>
            <person name="Kumagai A."/>
            <person name="Itakura S."/>
            <person name="Fukuzumi Y."/>
            <person name="Fujimori Y."/>
            <person name="Komiyama M."/>
            <person name="Tashiro H."/>
            <person name="Tanigami A."/>
            <person name="Fujiwara T."/>
            <person name="Ono T."/>
            <person name="Yamada K."/>
            <person name="Fujii Y."/>
            <person name="Ozaki K."/>
            <person name="Hirao M."/>
            <person name="Ohmori Y."/>
            <person name="Kawabata A."/>
            <person name="Hikiji T."/>
            <person name="Kobatake N."/>
            <person name="Inagaki H."/>
            <person name="Ikema Y."/>
            <person name="Okamoto S."/>
            <person name="Okitani R."/>
            <person name="Kawakami T."/>
            <person name="Noguchi S."/>
            <person name="Itoh T."/>
            <person name="Shigeta K."/>
            <person name="Senba T."/>
            <person name="Matsumura K."/>
            <person name="Nakajima Y."/>
            <person name="Mizuno T."/>
            <person name="Morinaga M."/>
            <person name="Sasaki M."/>
            <person name="Togashi T."/>
            <person name="Oyama M."/>
            <person name="Hata H."/>
            <person name="Watanabe M."/>
            <person name="Komatsu T."/>
            <person name="Mizushima-Sugano J."/>
            <person name="Satoh T."/>
            <person name="Shirai Y."/>
            <person name="Takahashi Y."/>
            <person name="Nakagawa K."/>
            <person name="Okumura K."/>
            <person name="Nagase T."/>
            <person name="Nomura N."/>
            <person name="Kikuchi H."/>
            <person name="Masuho Y."/>
            <person name="Yamashita R."/>
            <person name="Nakai K."/>
            <person name="Yada T."/>
            <person name="Nakamura Y."/>
            <person name="Ohara O."/>
            <person name="Isogai T."/>
            <person name="Sugano S."/>
        </authorList>
    </citation>
    <scope>NUCLEOTIDE SEQUENCE [LARGE SCALE MRNA]</scope>
</reference>
<reference key="3">
    <citation type="journal article" date="2007" name="BMC Genomics">
        <title>The full-ORF clone resource of the German cDNA consortium.</title>
        <authorList>
            <person name="Bechtel S."/>
            <person name="Rosenfelder H."/>
            <person name="Duda A."/>
            <person name="Schmidt C.P."/>
            <person name="Ernst U."/>
            <person name="Wellenreuther R."/>
            <person name="Mehrle A."/>
            <person name="Schuster C."/>
            <person name="Bahr A."/>
            <person name="Bloecker H."/>
            <person name="Heubner D."/>
            <person name="Hoerlein A."/>
            <person name="Michel G."/>
            <person name="Wedler H."/>
            <person name="Koehrer K."/>
            <person name="Ottenwaelder B."/>
            <person name="Poustka A."/>
            <person name="Wiemann S."/>
            <person name="Schupp I."/>
        </authorList>
    </citation>
    <scope>NUCLEOTIDE SEQUENCE [LARGE SCALE MRNA]</scope>
    <source>
        <tissue>Melanoma</tissue>
    </source>
</reference>
<reference key="4">
    <citation type="journal article" date="2004" name="Genome Res.">
        <title>The status, quality, and expansion of the NIH full-length cDNA project: the Mammalian Gene Collection (MGC).</title>
        <authorList>
            <consortium name="The MGC Project Team"/>
        </authorList>
    </citation>
    <scope>NUCLEOTIDE SEQUENCE [LARGE SCALE MRNA]</scope>
    <source>
        <tissue>B-cell</tissue>
    </source>
</reference>
<reference key="5">
    <citation type="journal article" date="2008" name="J. Mol. Med.">
        <title>EAPF/Phafin-2, a novel endoplasmic reticulum-associated protein, facilitates TNF-alpha-triggered cellular apoptosis through endoplasmic reticulum-mitochondrial apoptotic pathway.</title>
        <authorList>
            <person name="Li C."/>
            <person name="Liu Q."/>
            <person name="Li N."/>
            <person name="Chen W."/>
            <person name="Wang L."/>
            <person name="Wang Y."/>
            <person name="Yu Y."/>
            <person name="Cao X."/>
        </authorList>
    </citation>
    <scope>FUNCTION</scope>
    <scope>SUBCELLULAR LOCATION</scope>
    <scope>TISSUE SPECIFICITY</scope>
    <scope>INDUCTION</scope>
    <scope>DOMAIN</scope>
</reference>
<reference key="6">
    <citation type="journal article" date="2008" name="Proc. Natl. Acad. Sci. U.S.A.">
        <title>A quantitative atlas of mitotic phosphorylation.</title>
        <authorList>
            <person name="Dephoure N."/>
            <person name="Zhou C."/>
            <person name="Villen J."/>
            <person name="Beausoleil S.A."/>
            <person name="Bakalarski C.E."/>
            <person name="Elledge S.J."/>
            <person name="Gygi S.P."/>
        </authorList>
    </citation>
    <scope>PHOSPHORYLATION [LARGE SCALE ANALYSIS] AT SER-239</scope>
    <scope>IDENTIFICATION BY MASS SPECTROMETRY [LARGE SCALE ANALYSIS]</scope>
    <source>
        <tissue>Cervix carcinoma</tissue>
    </source>
</reference>
<reference key="7">
    <citation type="journal article" date="2009" name="Science">
        <title>Lysine acetylation targets protein complexes and co-regulates major cellular functions.</title>
        <authorList>
            <person name="Choudhary C."/>
            <person name="Kumar C."/>
            <person name="Gnad F."/>
            <person name="Nielsen M.L."/>
            <person name="Rehman M."/>
            <person name="Walther T.C."/>
            <person name="Olsen J.V."/>
            <person name="Mann M."/>
        </authorList>
    </citation>
    <scope>ACETYLATION [LARGE SCALE ANALYSIS] AT LYS-44</scope>
    <scope>IDENTIFICATION BY MASS SPECTROMETRY [LARGE SCALE ANALYSIS]</scope>
</reference>
<reference key="8">
    <citation type="journal article" date="2010" name="Biochem. Biophys. Res. Commun.">
        <title>Phafin2 modulates the structure and function of endosomes by a Rab5-dependent mechanism.</title>
        <authorList>
            <person name="Lin W.J."/>
            <person name="Yang C.Y."/>
            <person name="Lin Y.C."/>
            <person name="Tsai M.C."/>
            <person name="Yang C.W."/>
            <person name="Tung C.Y."/>
            <person name="Ho P.Y."/>
            <person name="Kao F.J."/>
            <person name="Lin C.H."/>
        </authorList>
    </citation>
    <scope>FUNCTION</scope>
    <scope>SUBCELLULAR LOCATION</scope>
</reference>
<reference key="9">
    <citation type="journal article" date="2010" name="Sci. Signal.">
        <title>Quantitative phosphoproteomics reveals widespread full phosphorylation site occupancy during mitosis.</title>
        <authorList>
            <person name="Olsen J.V."/>
            <person name="Vermeulen M."/>
            <person name="Santamaria A."/>
            <person name="Kumar C."/>
            <person name="Miller M.L."/>
            <person name="Jensen L.J."/>
            <person name="Gnad F."/>
            <person name="Cox J."/>
            <person name="Jensen T.S."/>
            <person name="Nigg E.A."/>
            <person name="Brunak S."/>
            <person name="Mann M."/>
        </authorList>
    </citation>
    <scope>PHOSPHORYLATION [LARGE SCALE ANALYSIS] AT SER-239 AND SER-248</scope>
    <scope>IDENTIFICATION BY MASS SPECTROMETRY [LARGE SCALE ANALYSIS]</scope>
    <source>
        <tissue>Cervix carcinoma</tissue>
    </source>
</reference>
<reference key="10">
    <citation type="journal article" date="2011" name="BMC Syst. Biol.">
        <title>Initial characterization of the human central proteome.</title>
        <authorList>
            <person name="Burkard T.R."/>
            <person name="Planyavsky M."/>
            <person name="Kaupe I."/>
            <person name="Breitwieser F.P."/>
            <person name="Buerckstuemmer T."/>
            <person name="Bennett K.L."/>
            <person name="Superti-Furga G."/>
            <person name="Colinge J."/>
        </authorList>
    </citation>
    <scope>IDENTIFICATION BY MASS SPECTROMETRY [LARGE SCALE ANALYSIS]</scope>
</reference>
<reference key="11">
    <citation type="journal article" date="2011" name="Sci. Signal.">
        <title>System-wide temporal characterization of the proteome and phosphoproteome of human embryonic stem cell differentiation.</title>
        <authorList>
            <person name="Rigbolt K.T."/>
            <person name="Prokhorova T.A."/>
            <person name="Akimov V."/>
            <person name="Henningsen J."/>
            <person name="Johansen P.T."/>
            <person name="Kratchmarova I."/>
            <person name="Kassem M."/>
            <person name="Mann M."/>
            <person name="Olsen J.V."/>
            <person name="Blagoev B."/>
        </authorList>
    </citation>
    <scope>PHOSPHORYLATION [LARGE SCALE ANALYSIS] AT SER-239 AND SER-248</scope>
    <scope>IDENTIFICATION BY MASS SPECTROMETRY [LARGE SCALE ANALYSIS]</scope>
</reference>
<reference key="12">
    <citation type="journal article" date="2012" name="Traffic">
        <title>The PtdIns3P-binding protein Phafin 2 mediates epidermal growth factor receptor degradation by promoting endosome fusion.</title>
        <authorList>
            <person name="Pedersen N.M."/>
            <person name="Raiborg C."/>
            <person name="Brech A."/>
            <person name="Skarpen E."/>
            <person name="Roxrud I."/>
            <person name="Platta H.W."/>
            <person name="Liestol K."/>
            <person name="Stenmark H."/>
        </authorList>
    </citation>
    <scope>FUNCTION</scope>
    <scope>INTERACTION WITH EEA1</scope>
    <scope>SUBCELLULAR LOCATION</scope>
</reference>
<reference key="13">
    <citation type="journal article" date="2013" name="J. Proteome Res.">
        <title>Toward a comprehensive characterization of a human cancer cell phosphoproteome.</title>
        <authorList>
            <person name="Zhou H."/>
            <person name="Di Palma S."/>
            <person name="Preisinger C."/>
            <person name="Peng M."/>
            <person name="Polat A.N."/>
            <person name="Heck A.J."/>
            <person name="Mohammed S."/>
        </authorList>
    </citation>
    <scope>PHOSPHORYLATION [LARGE SCALE ANALYSIS] AT SER-16</scope>
    <scope>IDENTIFICATION BY MASS SPECTROMETRY [LARGE SCALE ANALYSIS]</scope>
    <source>
        <tissue>Erythroleukemia</tissue>
    </source>
</reference>
<reference key="14">
    <citation type="journal article" date="2014" name="J. Proteomics">
        <title>An enzyme assisted RP-RPLC approach for in-depth analysis of human liver phosphoproteome.</title>
        <authorList>
            <person name="Bian Y."/>
            <person name="Song C."/>
            <person name="Cheng K."/>
            <person name="Dong M."/>
            <person name="Wang F."/>
            <person name="Huang J."/>
            <person name="Sun D."/>
            <person name="Wang L."/>
            <person name="Ye M."/>
            <person name="Zou H."/>
        </authorList>
    </citation>
    <scope>IDENTIFICATION BY MASS SPECTROMETRY [LARGE SCALE ANALYSIS]</scope>
    <source>
        <tissue>Liver</tissue>
    </source>
</reference>
<reference key="15">
    <citation type="journal article" date="2015" name="Proteomics">
        <title>N-terminome analysis of the human mitochondrial proteome.</title>
        <authorList>
            <person name="Vaca Jacome A.S."/>
            <person name="Rabilloud T."/>
            <person name="Schaeffer-Reiss C."/>
            <person name="Rompais M."/>
            <person name="Ayoub D."/>
            <person name="Lane L."/>
            <person name="Bairoch A."/>
            <person name="Van Dorsselaer A."/>
            <person name="Carapito C."/>
        </authorList>
    </citation>
    <scope>IDENTIFICATION BY MASS SPECTROMETRY [LARGE SCALE ANALYSIS]</scope>
</reference>
<protein>
    <recommendedName>
        <fullName>Pleckstrin homology domain-containing family F member 2</fullName>
        <shortName>PH domain-containing family F member 2</shortName>
    </recommendedName>
    <alternativeName>
        <fullName>Endoplasmic reticulum-associated apoptosis-involved protein containing PH and FYVE domains</fullName>
        <shortName>EAPF</shortName>
    </alternativeName>
    <alternativeName>
        <fullName>PH and FYVE domain-containing protein 2</fullName>
    </alternativeName>
    <alternativeName>
        <fullName>Phafin-2</fullName>
        <shortName>Phafin2</shortName>
    </alternativeName>
    <alternativeName>
        <fullName>Zinc finger FYVE domain-containing protein 18</fullName>
    </alternativeName>
</protein>
<evidence type="ECO:0000255" key="1">
    <source>
        <dbReference type="PROSITE-ProRule" id="PRU00091"/>
    </source>
</evidence>
<evidence type="ECO:0000255" key="2">
    <source>
        <dbReference type="PROSITE-ProRule" id="PRU00145"/>
    </source>
</evidence>
<evidence type="ECO:0000256" key="3">
    <source>
        <dbReference type="SAM" id="MobiDB-lite"/>
    </source>
</evidence>
<evidence type="ECO:0000269" key="4">
    <source>
    </source>
</evidence>
<evidence type="ECO:0000269" key="5">
    <source>
    </source>
</evidence>
<evidence type="ECO:0000269" key="6">
    <source>
    </source>
</evidence>
<evidence type="ECO:0000305" key="7">
    <source>
    </source>
</evidence>
<evidence type="ECO:0000305" key="8">
    <source>
    </source>
</evidence>
<evidence type="ECO:0007744" key="9">
    <source>
    </source>
</evidence>
<evidence type="ECO:0007744" key="10">
    <source>
    </source>
</evidence>
<evidence type="ECO:0007744" key="11">
    <source>
    </source>
</evidence>
<evidence type="ECO:0007744" key="12">
    <source>
    </source>
</evidence>
<evidence type="ECO:0007744" key="13">
    <source>
    </source>
</evidence>
<organism>
    <name type="scientific">Homo sapiens</name>
    <name type="common">Human</name>
    <dbReference type="NCBI Taxonomy" id="9606"/>
    <lineage>
        <taxon>Eukaryota</taxon>
        <taxon>Metazoa</taxon>
        <taxon>Chordata</taxon>
        <taxon>Craniata</taxon>
        <taxon>Vertebrata</taxon>
        <taxon>Euteleostomi</taxon>
        <taxon>Mammalia</taxon>
        <taxon>Eutheria</taxon>
        <taxon>Euarchontoglires</taxon>
        <taxon>Primates</taxon>
        <taxon>Haplorrhini</taxon>
        <taxon>Catarrhini</taxon>
        <taxon>Hominidae</taxon>
        <taxon>Homo</taxon>
    </lineage>
</organism>